<gene>
    <name evidence="5" type="primary">Tmem109</name>
</gene>
<reference key="1">
    <citation type="journal article" date="2004" name="Genome Res.">
        <title>The status, quality, and expansion of the NIH full-length cDNA project: the Mammalian Gene Collection (MGC).</title>
        <authorList>
            <consortium name="The MGC Project Team"/>
        </authorList>
    </citation>
    <scope>NUCLEOTIDE SEQUENCE [LARGE SCALE MRNA]</scope>
    <source>
        <tissue>Kidney</tissue>
    </source>
</reference>
<comment type="function">
    <text evidence="1 2 3">Functions as a voltage-gated monoatomic cation channel permeable to both potassium and calcium (By similarity). Plays a role in the cellular response to DNA damage (By similarity).</text>
</comment>
<comment type="catalytic activity">
    <reaction evidence="1">
        <text>K(+)(in) = K(+)(out)</text>
        <dbReference type="Rhea" id="RHEA:29463"/>
        <dbReference type="ChEBI" id="CHEBI:29103"/>
    </reaction>
</comment>
<comment type="catalytic activity">
    <reaction evidence="1">
        <text>Ca(2+)(in) = Ca(2+)(out)</text>
        <dbReference type="Rhea" id="RHEA:29671"/>
        <dbReference type="ChEBI" id="CHEBI:29108"/>
    </reaction>
</comment>
<comment type="subunit">
    <text evidence="1 3">Homooligomer. Interacts with CRYAB; in the cellular response to DNA damage.</text>
</comment>
<comment type="subcellular location">
    <subcellularLocation>
        <location evidence="1">Nucleus outer membrane</location>
        <topology evidence="1">Multi-pass membrane protein</topology>
    </subcellularLocation>
    <subcellularLocation>
        <location evidence="1">Endoplasmic reticulum membrane</location>
        <topology evidence="1">Multi-pass membrane protein</topology>
    </subcellularLocation>
    <subcellularLocation>
        <location evidence="1">Sarcoplasmic reticulum membrane</location>
        <topology evidence="1">Multi-pass membrane protein</topology>
    </subcellularLocation>
</comment>
<name>TM109_RAT</name>
<feature type="signal peptide" evidence="4">
    <location>
        <begin position="1"/>
        <end position="33"/>
    </location>
</feature>
<feature type="chain" id="PRO_0000044621" description="Voltage-gated monoatomic cation channel TMEM109">
    <location>
        <begin position="34"/>
        <end position="243"/>
    </location>
</feature>
<feature type="topological domain" description="Lumenal" evidence="1">
    <location>
        <begin position="34"/>
        <end position="83"/>
    </location>
</feature>
<feature type="transmembrane region" description="Helical" evidence="4">
    <location>
        <begin position="84"/>
        <end position="104"/>
    </location>
</feature>
<feature type="topological domain" description="Cytoplasmic" evidence="1">
    <location>
        <begin position="105"/>
        <end position="135"/>
    </location>
</feature>
<feature type="transmembrane region" description="Helical" evidence="4">
    <location>
        <begin position="136"/>
        <end position="156"/>
    </location>
</feature>
<feature type="topological domain" description="Lumenal" evidence="1">
    <location>
        <begin position="157"/>
        <end position="185"/>
    </location>
</feature>
<feature type="transmembrane region" description="Helical" evidence="4">
    <location>
        <begin position="186"/>
        <end position="205"/>
    </location>
</feature>
<feature type="topological domain" description="Cytoplasmic" evidence="1">
    <location>
        <begin position="206"/>
        <end position="243"/>
    </location>
</feature>
<protein>
    <recommendedName>
        <fullName evidence="1">Voltage-gated monoatomic cation channel TMEM109</fullName>
    </recommendedName>
    <alternativeName>
        <fullName evidence="5">Transmembrane protein 109</fullName>
    </alternativeName>
</protein>
<organism>
    <name type="scientific">Rattus norvegicus</name>
    <name type="common">Rat</name>
    <dbReference type="NCBI Taxonomy" id="10116"/>
    <lineage>
        <taxon>Eukaryota</taxon>
        <taxon>Metazoa</taxon>
        <taxon>Chordata</taxon>
        <taxon>Craniata</taxon>
        <taxon>Vertebrata</taxon>
        <taxon>Euteleostomi</taxon>
        <taxon>Mammalia</taxon>
        <taxon>Eutheria</taxon>
        <taxon>Euarchontoglires</taxon>
        <taxon>Glires</taxon>
        <taxon>Rodentia</taxon>
        <taxon>Myomorpha</taxon>
        <taxon>Muroidea</taxon>
        <taxon>Muridae</taxon>
        <taxon>Murinae</taxon>
        <taxon>Rattus</taxon>
    </lineage>
</organism>
<keyword id="KW-0256">Endoplasmic reticulum</keyword>
<keyword id="KW-0407">Ion channel</keyword>
<keyword id="KW-0406">Ion transport</keyword>
<keyword id="KW-0472">Membrane</keyword>
<keyword id="KW-0539">Nucleus</keyword>
<keyword id="KW-1185">Reference proteome</keyword>
<keyword id="KW-0703">Sarcoplasmic reticulum</keyword>
<keyword id="KW-0732">Signal</keyword>
<keyword id="KW-0812">Transmembrane</keyword>
<keyword id="KW-1133">Transmembrane helix</keyword>
<keyword id="KW-0813">Transport</keyword>
<keyword id="KW-0851">Voltage-gated channel</keyword>
<accession>Q6AYQ4</accession>
<dbReference type="EMBL" id="BC078955">
    <property type="protein sequence ID" value="AAH78955.1"/>
    <property type="molecule type" value="mRNA"/>
</dbReference>
<dbReference type="RefSeq" id="NP_001007737.1">
    <property type="nucleotide sequence ID" value="NM_001007736.1"/>
</dbReference>
<dbReference type="RefSeq" id="XP_006231121.1">
    <property type="nucleotide sequence ID" value="XM_006231059.5"/>
</dbReference>
<dbReference type="RefSeq" id="XP_008758458.1">
    <property type="nucleotide sequence ID" value="XM_008760236.2"/>
</dbReference>
<dbReference type="RefSeq" id="XP_008758459.1">
    <property type="nucleotide sequence ID" value="XM_008760237.2"/>
</dbReference>
<dbReference type="SMR" id="Q6AYQ4"/>
<dbReference type="BioGRID" id="262912">
    <property type="interactions" value="1"/>
</dbReference>
<dbReference type="FunCoup" id="Q6AYQ4">
    <property type="interactions" value="371"/>
</dbReference>
<dbReference type="STRING" id="10116.ENSRNOP00000036054"/>
<dbReference type="iPTMnet" id="Q6AYQ4"/>
<dbReference type="PhosphoSitePlus" id="Q6AYQ4"/>
<dbReference type="jPOST" id="Q6AYQ4"/>
<dbReference type="PaxDb" id="10116-ENSRNOP00000036054"/>
<dbReference type="Ensembl" id="ENSRNOT00000118882.1">
    <property type="protein sequence ID" value="ENSRNOP00000090031.1"/>
    <property type="gene ID" value="ENSRNOG00000028017.6"/>
</dbReference>
<dbReference type="GeneID" id="361732"/>
<dbReference type="KEGG" id="rno:361732"/>
<dbReference type="UCSC" id="RGD:1359538">
    <property type="organism name" value="rat"/>
</dbReference>
<dbReference type="AGR" id="RGD:1359538"/>
<dbReference type="CTD" id="79073"/>
<dbReference type="RGD" id="1359538">
    <property type="gene designation" value="Tmem109"/>
</dbReference>
<dbReference type="eggNOG" id="ENOG502S0EJ">
    <property type="taxonomic scope" value="Eukaryota"/>
</dbReference>
<dbReference type="GeneTree" id="ENSGT00390000015704"/>
<dbReference type="HOGENOM" id="CLU_099892_0_0_1"/>
<dbReference type="InParanoid" id="Q6AYQ4"/>
<dbReference type="PhylomeDB" id="Q6AYQ4"/>
<dbReference type="TreeFam" id="TF332238"/>
<dbReference type="PRO" id="PR:Q6AYQ4"/>
<dbReference type="Proteomes" id="UP000002494">
    <property type="component" value="Chromosome 1"/>
</dbReference>
<dbReference type="Bgee" id="ENSRNOG00000028017">
    <property type="expression patterns" value="Expressed in skeletal muscle tissue and 20 other cell types or tissues"/>
</dbReference>
<dbReference type="GO" id="GO:0034702">
    <property type="term" value="C:monoatomic ion channel complex"/>
    <property type="evidence" value="ECO:0007669"/>
    <property type="project" value="UniProtKB-KW"/>
</dbReference>
<dbReference type="GO" id="GO:0005640">
    <property type="term" value="C:nuclear outer membrane"/>
    <property type="evidence" value="ECO:0007669"/>
    <property type="project" value="UniProtKB-SubCell"/>
</dbReference>
<dbReference type="GO" id="GO:0033017">
    <property type="term" value="C:sarcoplasmic reticulum membrane"/>
    <property type="evidence" value="ECO:0000250"/>
    <property type="project" value="UniProtKB"/>
</dbReference>
<dbReference type="GO" id="GO:0022843">
    <property type="term" value="F:voltage-gated monoatomic cation channel activity"/>
    <property type="evidence" value="ECO:0000250"/>
    <property type="project" value="UniProtKB"/>
</dbReference>
<dbReference type="GO" id="GO:0071480">
    <property type="term" value="P:cellular response to gamma radiation"/>
    <property type="evidence" value="ECO:0000266"/>
    <property type="project" value="RGD"/>
</dbReference>
<dbReference type="GO" id="GO:0042771">
    <property type="term" value="P:intrinsic apoptotic signaling pathway in response to DNA damage by p53 class mediator"/>
    <property type="evidence" value="ECO:0000266"/>
    <property type="project" value="RGD"/>
</dbReference>
<dbReference type="GO" id="GO:0043069">
    <property type="term" value="P:negative regulation of programmed cell death"/>
    <property type="evidence" value="ECO:0000266"/>
    <property type="project" value="RGD"/>
</dbReference>
<dbReference type="InterPro" id="IPR039492">
    <property type="entry name" value="TMEM109"/>
</dbReference>
<dbReference type="PANTHER" id="PTHR14550">
    <property type="entry name" value="TRANSMEMBRANE PROTEIN 109"/>
    <property type="match status" value="1"/>
</dbReference>
<dbReference type="PANTHER" id="PTHR14550:SF2">
    <property type="entry name" value="TRANSMEMBRANE PROTEIN 109"/>
    <property type="match status" value="1"/>
</dbReference>
<dbReference type="Pfam" id="PF14965">
    <property type="entry name" value="BRI3BP"/>
    <property type="match status" value="1"/>
</dbReference>
<sequence>MAGAHSNPSWSRHLFKAVLMVLGALLLVHSASAQTHREFASPGQQKRESSADILTEIGRSLKETLDTWLGPETMHVISETLLQVMWAISSAISVACFALSGIAAQLLSALGLDGEQLTQVLKLSPSQVQTLLLWGAAALVIYWLLSLLLGLVLALLGRILGGLKLVLFVAGFVGLVRSVPDPSTRALLLLALLTVFALLSRLTGSRSSGTHLEAKVRGLERQIEELRGRQRRAAKIPRSMEEE</sequence>
<evidence type="ECO:0000250" key="1">
    <source>
        <dbReference type="UniProtKB" id="O77751"/>
    </source>
</evidence>
<evidence type="ECO:0000250" key="2">
    <source>
        <dbReference type="UniProtKB" id="Q3UBX0"/>
    </source>
</evidence>
<evidence type="ECO:0000250" key="3">
    <source>
        <dbReference type="UniProtKB" id="Q9BVC6"/>
    </source>
</evidence>
<evidence type="ECO:0000255" key="4"/>
<evidence type="ECO:0000312" key="5">
    <source>
        <dbReference type="RGD" id="1359538"/>
    </source>
</evidence>
<proteinExistence type="evidence at transcript level"/>